<comment type="function">
    <text evidence="1 4">Monooxygenase involved in the biosynthesis of carnosate, a potent antioxidant labdane-related diterpene natural product (By similarity). Catalyzes the oxidation of 11-hydroxyferruginol to produce carnosate (By similarity). Mediates the conversion of miltiradien into miltiradien-20-al (PubMed:27703160). Also involved in the production of pisiferic acid and derivative products from ferruginol (By similarity).</text>
</comment>
<comment type="catalytic activity">
    <reaction evidence="1">
        <text>11-hydroxyferruginol + 3 reduced [NADPH--hemoprotein reductase] + 3 O2 = carnosate + 3 oxidized [NADPH--hemoprotein reductase] + 4 H2O + 4 H(+)</text>
        <dbReference type="Rhea" id="RHEA:55432"/>
        <dbReference type="Rhea" id="RHEA-COMP:11964"/>
        <dbReference type="Rhea" id="RHEA-COMP:11965"/>
        <dbReference type="ChEBI" id="CHEBI:15377"/>
        <dbReference type="ChEBI" id="CHEBI:15378"/>
        <dbReference type="ChEBI" id="CHEBI:15379"/>
        <dbReference type="ChEBI" id="CHEBI:57618"/>
        <dbReference type="ChEBI" id="CHEBI:58210"/>
        <dbReference type="ChEBI" id="CHEBI:138942"/>
        <dbReference type="ChEBI" id="CHEBI:138943"/>
        <dbReference type="EC" id="1.14.14.61"/>
    </reaction>
    <physiologicalReaction direction="left-to-right" evidence="1">
        <dbReference type="Rhea" id="RHEA:55433"/>
    </physiologicalReaction>
</comment>
<comment type="catalytic activity">
    <reaction evidence="4">
        <text>miltiradiene + 2 reduced [NADPH--hemoprotein reductase] + 2 O2 = miltiradien-20-al + 2 oxidized [NADPH--hemoprotein reductase] + 3 H2O + 2 H(+)</text>
        <dbReference type="Rhea" id="RHEA:66800"/>
        <dbReference type="Rhea" id="RHEA-COMP:11964"/>
        <dbReference type="Rhea" id="RHEA-COMP:11965"/>
        <dbReference type="ChEBI" id="CHEBI:15377"/>
        <dbReference type="ChEBI" id="CHEBI:15378"/>
        <dbReference type="ChEBI" id="CHEBI:15379"/>
        <dbReference type="ChEBI" id="CHEBI:57618"/>
        <dbReference type="ChEBI" id="CHEBI:58210"/>
        <dbReference type="ChEBI" id="CHEBI:65037"/>
        <dbReference type="ChEBI" id="CHEBI:167488"/>
    </reaction>
    <physiologicalReaction direction="left-to-right" evidence="4">
        <dbReference type="Rhea" id="RHEA:66801"/>
    </physiologicalReaction>
</comment>
<comment type="catalytic activity">
    <reaction evidence="1">
        <text>ferruginol + 3 reduced [NADPH--hemoprotein reductase] + 3 O2 = pisiferate + 3 oxidized [NADPH--hemoprotein reductase] + 4 H2O + 4 H(+)</text>
        <dbReference type="Rhea" id="RHEA:66804"/>
        <dbReference type="Rhea" id="RHEA-COMP:11964"/>
        <dbReference type="Rhea" id="RHEA-COMP:11965"/>
        <dbReference type="ChEBI" id="CHEBI:15377"/>
        <dbReference type="ChEBI" id="CHEBI:15378"/>
        <dbReference type="ChEBI" id="CHEBI:15379"/>
        <dbReference type="ChEBI" id="CHEBI:57618"/>
        <dbReference type="ChEBI" id="CHEBI:58210"/>
        <dbReference type="ChEBI" id="CHEBI:78274"/>
        <dbReference type="ChEBI" id="CHEBI:167487"/>
    </reaction>
    <physiologicalReaction direction="left-to-right" evidence="1">
        <dbReference type="Rhea" id="RHEA:66805"/>
    </physiologicalReaction>
</comment>
<comment type="cofactor">
    <cofactor evidence="2">
        <name>heme</name>
        <dbReference type="ChEBI" id="CHEBI:30413"/>
    </cofactor>
</comment>
<comment type="pathway">
    <text evidence="8">Secondary metabolite biosynthesis; terpenoid biosynthesis.</text>
</comment>
<comment type="subcellular location">
    <subcellularLocation>
        <location evidence="3">Membrane</location>
        <topology evidence="3">Single-pass membrane protein</topology>
    </subcellularLocation>
</comment>
<comment type="tissue specificity">
    <text evidence="4">Expressed in glandular trichomes of young leaves.</text>
</comment>
<comment type="similarity">
    <text evidence="6">Belongs to the cytochrome P450 family.</text>
</comment>
<evidence type="ECO:0000250" key="1">
    <source>
        <dbReference type="UniProtKB" id="A0A1D8QMG4"/>
    </source>
</evidence>
<evidence type="ECO:0000250" key="2">
    <source>
        <dbReference type="UniProtKB" id="Q94IP1"/>
    </source>
</evidence>
<evidence type="ECO:0000255" key="3"/>
<evidence type="ECO:0000269" key="4">
    <source>
    </source>
</evidence>
<evidence type="ECO:0000303" key="5">
    <source>
    </source>
</evidence>
<evidence type="ECO:0000305" key="6"/>
<evidence type="ECO:0000305" key="7">
    <source>
    </source>
</evidence>
<evidence type="ECO:0000305" key="8">
    <source>
    </source>
</evidence>
<name>C76K7_ROSOF</name>
<feature type="chain" id="PRO_0000452737" description="Carnosic acid synthase">
    <location>
        <begin position="1"/>
        <end position="507"/>
    </location>
</feature>
<feature type="transmembrane region" description="Helical" evidence="3">
    <location>
        <begin position="6"/>
        <end position="23"/>
    </location>
</feature>
<feature type="binding site" description="axial binding residue" evidence="2">
    <location>
        <position position="450"/>
    </location>
    <ligand>
        <name>heme</name>
        <dbReference type="ChEBI" id="CHEBI:30413"/>
    </ligand>
    <ligandPart>
        <name>Fe</name>
        <dbReference type="ChEBI" id="CHEBI:18248"/>
    </ligandPart>
</feature>
<sequence length="507" mass="57245">MDAFVVFSLAFLAAWFIVVFPRWSDSRRRRGPGGELPPGPPPLPIVGNILQLRGDPHKSFAQLAKTYGPLMSLRLGTQFAVVVSSPEMATEILQKHGHAFSNRSIPDAINIHGHNEVSWNTMPADSTGWKRIRRVGREKLFSHQALQQTEGQRQERLRKLADHVRGFSEQGRVMNVGEATFTTMTDLVFSTLFSIDLTDYGATDSIANKEFKEHVNAFTRYIGVPNISDFFPIFAPLDPQGIRRKIGHHLGSLLAFVQSMIEERLRERKASTYQKKNDFLDTLLDISEEGNGYDDLSIKEIRHFCVDIIVAGSDTSAATTEWAMVELLLHPDKLAKLKAELKSFLGEKSLVEGSDISKLPYLQATIKEVFRFHPAAPLLGPREAVEETQINGYTIPKNAKIMVNFWAMTRDPSIWKNPESFEPERFLGKDIDYEGQHFELIPFGSGRRICPGMPLASRMLHCMVATLCHNFDWELEGGAESKQRQREDVFGLALQKKFPLRAKPIKV</sequence>
<gene>
    <name evidence="5" type="primary">CYP76AK7</name>
</gene>
<reference key="1">
    <citation type="journal article" date="2016" name="Nat. Commun.">
        <title>Elucidation of the biosynthesis of carnosic acid and its reconstitution in yeast.</title>
        <authorList>
            <person name="Scheler U."/>
            <person name="Brandt W."/>
            <person name="Porzel A."/>
            <person name="Rothe K."/>
            <person name="Manzano D."/>
            <person name="Bozic D."/>
            <person name="Papaefthimiou D."/>
            <person name="Balcke G.U."/>
            <person name="Henning A."/>
            <person name="Lohse S."/>
            <person name="Marillonnet S."/>
            <person name="Kanellis A.K."/>
            <person name="Ferrer A."/>
            <person name="Tissier A."/>
        </authorList>
    </citation>
    <scope>NUCLEOTIDE SEQUENCE [MRNA]</scope>
    <scope>FUNCTION</scope>
    <scope>CATALYTIC ACTIVITY</scope>
    <scope>TISSUE SPECIFICITY</scope>
</reference>
<reference key="2">
    <citation type="journal article" date="2019" name="Nat. Prod. Rep.">
        <title>Non-volatile natural products in plant glandular trichomes: chemistry, biological activities and biosynthesis.</title>
        <authorList>
            <person name="Liu Y."/>
            <person name="Jing S.-X."/>
            <person name="Luo S.-H."/>
            <person name="Li S.-H."/>
        </authorList>
    </citation>
    <scope>PATHWAY</scope>
    <scope>REVIEW</scope>
</reference>
<proteinExistence type="evidence at protein level"/>
<keyword id="KW-0349">Heme</keyword>
<keyword id="KW-0408">Iron</keyword>
<keyword id="KW-0472">Membrane</keyword>
<keyword id="KW-0479">Metal-binding</keyword>
<keyword id="KW-0503">Monooxygenase</keyword>
<keyword id="KW-0560">Oxidoreductase</keyword>
<keyword id="KW-0812">Transmembrane</keyword>
<keyword id="KW-1133">Transmembrane helix</keyword>
<protein>
    <recommendedName>
        <fullName evidence="6">Carnosic acid synthase</fullName>
        <ecNumber evidence="1">1.14.14.61</ecNumber>
    </recommendedName>
    <alternativeName>
        <fullName evidence="5">Cytochrome P450 76AK7</fullName>
        <shortName evidence="5">RoCYP76AK7</shortName>
    </alternativeName>
    <alternativeName>
        <fullName evidence="7">Miltiradien-20-al synthase</fullName>
        <ecNumber evidence="4">1.14.14.-</ecNumber>
    </alternativeName>
    <alternativeName>
        <fullName evidence="7">Pisiferic acid synthase</fullName>
        <ecNumber evidence="1">1.14.14.-</ecNumber>
    </alternativeName>
</protein>
<organism>
    <name type="scientific">Rosmarinus officinalis</name>
    <name type="common">Rosemary</name>
    <name type="synonym">Salvia rosmarinus</name>
    <dbReference type="NCBI Taxonomy" id="39367"/>
    <lineage>
        <taxon>Eukaryota</taxon>
        <taxon>Viridiplantae</taxon>
        <taxon>Streptophyta</taxon>
        <taxon>Embryophyta</taxon>
        <taxon>Tracheophyta</taxon>
        <taxon>Spermatophyta</taxon>
        <taxon>Magnoliopsida</taxon>
        <taxon>eudicotyledons</taxon>
        <taxon>Gunneridae</taxon>
        <taxon>Pentapetalae</taxon>
        <taxon>asterids</taxon>
        <taxon>lamiids</taxon>
        <taxon>Lamiales</taxon>
        <taxon>Lamiaceae</taxon>
        <taxon>Nepetoideae</taxon>
        <taxon>Mentheae</taxon>
        <taxon>Salviinae</taxon>
        <taxon>Salvia</taxon>
        <taxon>Salvia subgen. Rosmarinus</taxon>
    </lineage>
</organism>
<accession>A0A1D8QMD2</accession>
<dbReference type="EC" id="1.14.14.61" evidence="1"/>
<dbReference type="EC" id="1.14.14.-" evidence="4 1"/>
<dbReference type="EMBL" id="KX431219">
    <property type="protein sequence ID" value="AOW42545.1"/>
    <property type="molecule type" value="mRNA"/>
</dbReference>
<dbReference type="SMR" id="A0A1D8QMD2"/>
<dbReference type="UniPathway" id="UPA00213"/>
<dbReference type="GO" id="GO:0016020">
    <property type="term" value="C:membrane"/>
    <property type="evidence" value="ECO:0007669"/>
    <property type="project" value="UniProtKB-SubCell"/>
</dbReference>
<dbReference type="GO" id="GO:0020037">
    <property type="term" value="F:heme binding"/>
    <property type="evidence" value="ECO:0007669"/>
    <property type="project" value="InterPro"/>
</dbReference>
<dbReference type="GO" id="GO:0005506">
    <property type="term" value="F:iron ion binding"/>
    <property type="evidence" value="ECO:0007669"/>
    <property type="project" value="InterPro"/>
</dbReference>
<dbReference type="GO" id="GO:0016712">
    <property type="term" value="F:oxidoreductase activity, acting on paired donors, with incorporation or reduction of molecular oxygen, reduced flavin or flavoprotein as one donor, and incorporation of one atom of oxygen"/>
    <property type="evidence" value="ECO:0007669"/>
    <property type="project" value="UniProtKB-ARBA"/>
</dbReference>
<dbReference type="GO" id="GO:0016114">
    <property type="term" value="P:terpenoid biosynthetic process"/>
    <property type="evidence" value="ECO:0007669"/>
    <property type="project" value="UniProtKB-UniPathway"/>
</dbReference>
<dbReference type="CDD" id="cd11073">
    <property type="entry name" value="CYP76-like"/>
    <property type="match status" value="1"/>
</dbReference>
<dbReference type="FunFam" id="1.10.630.10:FF:000007">
    <property type="entry name" value="Cytochrome P450 76C4"/>
    <property type="match status" value="1"/>
</dbReference>
<dbReference type="Gene3D" id="1.10.630.10">
    <property type="entry name" value="Cytochrome P450"/>
    <property type="match status" value="1"/>
</dbReference>
<dbReference type="InterPro" id="IPR001128">
    <property type="entry name" value="Cyt_P450"/>
</dbReference>
<dbReference type="InterPro" id="IPR017972">
    <property type="entry name" value="Cyt_P450_CS"/>
</dbReference>
<dbReference type="InterPro" id="IPR002401">
    <property type="entry name" value="Cyt_P450_E_grp-I"/>
</dbReference>
<dbReference type="InterPro" id="IPR036396">
    <property type="entry name" value="Cyt_P450_sf"/>
</dbReference>
<dbReference type="PANTHER" id="PTHR47950">
    <property type="entry name" value="CYTOCHROME P450, FAMILY 76, SUBFAMILY C, POLYPEPTIDE 5-RELATED"/>
    <property type="match status" value="1"/>
</dbReference>
<dbReference type="PANTHER" id="PTHR47950:SF4">
    <property type="entry name" value="GERANIOL 8-HYDROXYLASE-LIKE"/>
    <property type="match status" value="1"/>
</dbReference>
<dbReference type="Pfam" id="PF00067">
    <property type="entry name" value="p450"/>
    <property type="match status" value="1"/>
</dbReference>
<dbReference type="PRINTS" id="PR00463">
    <property type="entry name" value="EP450I"/>
</dbReference>
<dbReference type="PRINTS" id="PR00385">
    <property type="entry name" value="P450"/>
</dbReference>
<dbReference type="SUPFAM" id="SSF48264">
    <property type="entry name" value="Cytochrome P450"/>
    <property type="match status" value="1"/>
</dbReference>
<dbReference type="PROSITE" id="PS00086">
    <property type="entry name" value="CYTOCHROME_P450"/>
    <property type="match status" value="1"/>
</dbReference>